<reference key="1">
    <citation type="journal article" date="1998" name="DNA Res.">
        <title>Structural analysis of Arabidopsis thaliana chromosome 5. V. Sequence features of the regions of 1,381,565 bp covered by twenty one physically assigned P1 and TAC clones.</title>
        <authorList>
            <person name="Kaneko T."/>
            <person name="Kotani H."/>
            <person name="Nakamura Y."/>
            <person name="Sato S."/>
            <person name="Asamizu E."/>
            <person name="Miyajima N."/>
            <person name="Tabata S."/>
        </authorList>
    </citation>
    <scope>NUCLEOTIDE SEQUENCE [LARGE SCALE GENOMIC DNA]</scope>
    <source>
        <strain>cv. Columbia</strain>
    </source>
</reference>
<reference key="2">
    <citation type="journal article" date="2017" name="Plant J.">
        <title>Araport11: a complete reannotation of the Arabidopsis thaliana reference genome.</title>
        <authorList>
            <person name="Cheng C.Y."/>
            <person name="Krishnakumar V."/>
            <person name="Chan A.P."/>
            <person name="Thibaud-Nissen F."/>
            <person name="Schobel S."/>
            <person name="Town C.D."/>
        </authorList>
    </citation>
    <scope>GENOME REANNOTATION</scope>
    <source>
        <strain>cv. Columbia</strain>
    </source>
</reference>
<reference key="3">
    <citation type="journal article" date="2004" name="Genome Res.">
        <title>Whole genome sequence comparisons and 'full-length' cDNA sequences: a combined approach to evaluate and improve Arabidopsis genome annotation.</title>
        <authorList>
            <person name="Castelli V."/>
            <person name="Aury J.-M."/>
            <person name="Jaillon O."/>
            <person name="Wincker P."/>
            <person name="Clepet C."/>
            <person name="Menard M."/>
            <person name="Cruaud C."/>
            <person name="Quetier F."/>
            <person name="Scarpelli C."/>
            <person name="Schaechter V."/>
            <person name="Temple G."/>
            <person name="Caboche M."/>
            <person name="Weissenbach J."/>
            <person name="Salanoubat M."/>
        </authorList>
    </citation>
    <scope>NUCLEOTIDE SEQUENCE [LARGE SCALE MRNA] OF 4-402</scope>
    <source>
        <strain>cv. Columbia</strain>
    </source>
</reference>
<accession>Q9FL41</accession>
<protein>
    <recommendedName>
        <fullName>WAT1-related protein At5g07050</fullName>
    </recommendedName>
</protein>
<organism>
    <name type="scientific">Arabidopsis thaliana</name>
    <name type="common">Mouse-ear cress</name>
    <dbReference type="NCBI Taxonomy" id="3702"/>
    <lineage>
        <taxon>Eukaryota</taxon>
        <taxon>Viridiplantae</taxon>
        <taxon>Streptophyta</taxon>
        <taxon>Embryophyta</taxon>
        <taxon>Tracheophyta</taxon>
        <taxon>Spermatophyta</taxon>
        <taxon>Magnoliopsida</taxon>
        <taxon>eudicotyledons</taxon>
        <taxon>Gunneridae</taxon>
        <taxon>Pentapetalae</taxon>
        <taxon>rosids</taxon>
        <taxon>malvids</taxon>
        <taxon>Brassicales</taxon>
        <taxon>Brassicaceae</taxon>
        <taxon>Camelineae</taxon>
        <taxon>Arabidopsis</taxon>
    </lineage>
</organism>
<sequence length="402" mass="44356">MSMEEISSCESFLTSSKPYFAMISLQFGYAGMNIITKISLNTGMSHYVLVVYRHAIATAVIAPFAFFFERKAQPKITFSIFMQLFILGLLGPVIDQNFYYMGLKYTSPTFSCAMSNMLPAMTFILAVLFRMEMLDLKKLWCQAKIAGTVVTVAGAMLMTIYKGPIVELFWTKYMHIQDSSHANTTSSKNSSSDKEFLKGSILLIFATLAWASLFVLQAKILKTYAKHQLSLTTLICFIGTLQAVAVTFVMEHNPSAWRIGWDMNLLAAAYSGIVASSISYYVQGIVMKKRGPVFATAFSPLMMVIVAVMGSFVLAEKIFLGGVIGAVLIVIGLYAVLWGKQKENQVTICELAKIDSNSKVTEDVEANGSKMKISEGDNSMLSTIVISVPLSETHLKKTIQEP</sequence>
<name>WTR38_ARATH</name>
<proteinExistence type="evidence at transcript level"/>
<feature type="chain" id="PRO_0000421345" description="WAT1-related protein At5g07050">
    <location>
        <begin position="1"/>
        <end position="402"/>
    </location>
</feature>
<feature type="transmembrane region" description="Helical" evidence="2">
    <location>
        <begin position="20"/>
        <end position="40"/>
    </location>
</feature>
<feature type="transmembrane region" description="Helical" evidence="2">
    <location>
        <begin position="48"/>
        <end position="68"/>
    </location>
</feature>
<feature type="transmembrane region" description="Helical" evidence="2">
    <location>
        <begin position="74"/>
        <end position="94"/>
    </location>
</feature>
<feature type="transmembrane region" description="Helical" evidence="2">
    <location>
        <begin position="109"/>
        <end position="129"/>
    </location>
</feature>
<feature type="transmembrane region" description="Helical" evidence="2">
    <location>
        <begin position="149"/>
        <end position="169"/>
    </location>
</feature>
<feature type="transmembrane region" description="Helical" evidence="2">
    <location>
        <begin position="196"/>
        <end position="216"/>
    </location>
</feature>
<feature type="transmembrane region" description="Helical" evidence="2">
    <location>
        <begin position="229"/>
        <end position="249"/>
    </location>
</feature>
<feature type="transmembrane region" description="Helical" evidence="2">
    <location>
        <begin position="266"/>
        <end position="286"/>
    </location>
</feature>
<feature type="transmembrane region" description="Helical" evidence="2">
    <location>
        <begin position="293"/>
        <end position="313"/>
    </location>
</feature>
<feature type="transmembrane region" description="Helical" evidence="2">
    <location>
        <begin position="318"/>
        <end position="338"/>
    </location>
</feature>
<feature type="domain" description="EamA 1">
    <location>
        <begin position="29"/>
        <end position="159"/>
    </location>
</feature>
<feature type="domain" description="EamA 2">
    <location>
        <begin position="208"/>
        <end position="337"/>
    </location>
</feature>
<feature type="sequence conflict" description="In Ref. 3; BX831593." evidence="3" ref="3">
    <original>I</original>
    <variation>M</variation>
    <location>
        <position position="76"/>
    </location>
</feature>
<feature type="sequence conflict" description="In Ref. 3; BX832761." evidence="3" ref="3">
    <original>T</original>
    <variation>K</variation>
    <location>
        <position position="207"/>
    </location>
</feature>
<feature type="sequence conflict" description="In Ref. 3; BX832761." evidence="3" ref="3">
    <original>V</original>
    <variation>E</variation>
    <location>
        <position position="346"/>
    </location>
</feature>
<comment type="subcellular location">
    <subcellularLocation>
        <location evidence="1">Membrane</location>
        <topology evidence="3">Multi-pass membrane protein</topology>
    </subcellularLocation>
</comment>
<comment type="similarity">
    <text evidence="3">Belongs to the drug/metabolite transporter (DMT) superfamily. Plant drug/metabolite exporter (P-DME) (TC 2.A.7.4) family.</text>
</comment>
<comment type="sequence caution" evidence="3">
    <conflict type="frameshift">
        <sequence resource="EMBL" id="BX832761"/>
    </conflict>
</comment>
<gene>
    <name type="ordered locus">At5g07050</name>
    <name type="ORF">MOJ9.22</name>
</gene>
<dbReference type="EMBL" id="AB010697">
    <property type="protein sequence ID" value="BAB11163.1"/>
    <property type="molecule type" value="Genomic_DNA"/>
</dbReference>
<dbReference type="EMBL" id="CP002688">
    <property type="protein sequence ID" value="AED91102.1"/>
    <property type="molecule type" value="Genomic_DNA"/>
</dbReference>
<dbReference type="EMBL" id="BX831593">
    <property type="status" value="NOT_ANNOTATED_CDS"/>
    <property type="molecule type" value="mRNA"/>
</dbReference>
<dbReference type="EMBL" id="BX832761">
    <property type="status" value="NOT_ANNOTATED_CDS"/>
    <property type="molecule type" value="mRNA"/>
</dbReference>
<dbReference type="RefSeq" id="NP_196322.3">
    <property type="nucleotide sequence ID" value="NM_120787.3"/>
</dbReference>
<dbReference type="SMR" id="Q9FL41"/>
<dbReference type="STRING" id="3702.Q9FL41"/>
<dbReference type="PaxDb" id="3702-AT5G07050.1"/>
<dbReference type="EnsemblPlants" id="AT5G07050.1">
    <property type="protein sequence ID" value="AT5G07050.1"/>
    <property type="gene ID" value="AT5G07050"/>
</dbReference>
<dbReference type="GeneID" id="830596"/>
<dbReference type="Gramene" id="AT5G07050.1">
    <property type="protein sequence ID" value="AT5G07050.1"/>
    <property type="gene ID" value="AT5G07050"/>
</dbReference>
<dbReference type="KEGG" id="ath:AT5G07050"/>
<dbReference type="Araport" id="AT5G07050"/>
<dbReference type="TAIR" id="AT5G07050">
    <property type="gene designation" value="UMAMIT9"/>
</dbReference>
<dbReference type="eggNOG" id="ENOG502QRHH">
    <property type="taxonomic scope" value="Eukaryota"/>
</dbReference>
<dbReference type="HOGENOM" id="CLU_025359_1_1_1"/>
<dbReference type="InParanoid" id="Q9FL41"/>
<dbReference type="OMA" id="VEMIWTK"/>
<dbReference type="OrthoDB" id="1728340at2759"/>
<dbReference type="PhylomeDB" id="Q9FL41"/>
<dbReference type="PRO" id="PR:Q9FL41"/>
<dbReference type="Proteomes" id="UP000006548">
    <property type="component" value="Chromosome 5"/>
</dbReference>
<dbReference type="ExpressionAtlas" id="Q9FL41">
    <property type="expression patterns" value="baseline and differential"/>
</dbReference>
<dbReference type="GO" id="GO:0016020">
    <property type="term" value="C:membrane"/>
    <property type="evidence" value="ECO:0007669"/>
    <property type="project" value="UniProtKB-SubCell"/>
</dbReference>
<dbReference type="GO" id="GO:0022857">
    <property type="term" value="F:transmembrane transporter activity"/>
    <property type="evidence" value="ECO:0007669"/>
    <property type="project" value="InterPro"/>
</dbReference>
<dbReference type="InterPro" id="IPR000620">
    <property type="entry name" value="EamA_dom"/>
</dbReference>
<dbReference type="InterPro" id="IPR030184">
    <property type="entry name" value="WAT1-related"/>
</dbReference>
<dbReference type="PANTHER" id="PTHR31218">
    <property type="entry name" value="WAT1-RELATED PROTEIN"/>
    <property type="match status" value="1"/>
</dbReference>
<dbReference type="Pfam" id="PF00892">
    <property type="entry name" value="EamA"/>
    <property type="match status" value="2"/>
</dbReference>
<dbReference type="SUPFAM" id="SSF103481">
    <property type="entry name" value="Multidrug resistance efflux transporter EmrE"/>
    <property type="match status" value="2"/>
</dbReference>
<evidence type="ECO:0000250" key="1"/>
<evidence type="ECO:0000255" key="2"/>
<evidence type="ECO:0000305" key="3"/>
<keyword id="KW-0472">Membrane</keyword>
<keyword id="KW-1185">Reference proteome</keyword>
<keyword id="KW-0677">Repeat</keyword>
<keyword id="KW-0812">Transmembrane</keyword>
<keyword id="KW-1133">Transmembrane helix</keyword>